<protein>
    <recommendedName>
        <fullName>Dual specificity phosphatase 29</fullName>
    </recommendedName>
    <alternativeName>
        <fullName>Dual specificity phosphatase DUPD1</fullName>
        <ecNumber evidence="1">3.1.3.16</ecNumber>
        <ecNumber evidence="1">3.1.3.48</ecNumber>
    </alternativeName>
</protein>
<proteinExistence type="inferred from homology"/>
<name>DUS29_ORYLA</name>
<accession>P0C5A1</accession>
<keyword id="KW-0963">Cytoplasm</keyword>
<keyword id="KW-0378">Hydrolase</keyword>
<keyword id="KW-0539">Nucleus</keyword>
<keyword id="KW-0904">Protein phosphatase</keyword>
<keyword id="KW-1185">Reference proteome</keyword>
<feature type="chain" id="PRO_0000295888" description="Dual specificity phosphatase 29">
    <location>
        <begin position="1"/>
        <end position="203"/>
    </location>
</feature>
<feature type="domain" description="Tyrosine-protein phosphatase" evidence="3">
    <location>
        <begin position="47"/>
        <end position="193"/>
    </location>
</feature>
<feature type="active site" description="Phosphocysteine intermediate" evidence="3">
    <location>
        <position position="138"/>
    </location>
</feature>
<feature type="binding site" evidence="1">
    <location>
        <begin position="137"/>
        <end position="144"/>
    </location>
    <ligand>
        <name>substrate</name>
    </ligand>
</feature>
<comment type="function">
    <text evidence="1 2">Dual specificity phosphatase able to dephosphorylate phosphotyrosine, phosphoserine and phosphothreonine residues within the same substrate, with a preference for phosphotyrosine as a substrate (By similarity). Involved in the modulation of AMPK and MAPK1/2 signaling pathways (By similarity).</text>
</comment>
<comment type="catalytic activity">
    <reaction evidence="1">
        <text>O-phospho-L-tyrosyl-[protein] + H2O = L-tyrosyl-[protein] + phosphate</text>
        <dbReference type="Rhea" id="RHEA:10684"/>
        <dbReference type="Rhea" id="RHEA-COMP:10136"/>
        <dbReference type="Rhea" id="RHEA-COMP:20101"/>
        <dbReference type="ChEBI" id="CHEBI:15377"/>
        <dbReference type="ChEBI" id="CHEBI:43474"/>
        <dbReference type="ChEBI" id="CHEBI:46858"/>
        <dbReference type="ChEBI" id="CHEBI:61978"/>
        <dbReference type="EC" id="3.1.3.48"/>
    </reaction>
</comment>
<comment type="catalytic activity">
    <reaction evidence="1">
        <text>O-phospho-L-seryl-[protein] + H2O = L-seryl-[protein] + phosphate</text>
        <dbReference type="Rhea" id="RHEA:20629"/>
        <dbReference type="Rhea" id="RHEA-COMP:9863"/>
        <dbReference type="Rhea" id="RHEA-COMP:11604"/>
        <dbReference type="ChEBI" id="CHEBI:15377"/>
        <dbReference type="ChEBI" id="CHEBI:29999"/>
        <dbReference type="ChEBI" id="CHEBI:43474"/>
        <dbReference type="ChEBI" id="CHEBI:83421"/>
        <dbReference type="EC" id="3.1.3.16"/>
    </reaction>
</comment>
<comment type="catalytic activity">
    <reaction evidence="1">
        <text>O-phospho-L-threonyl-[protein] + H2O = L-threonyl-[protein] + phosphate</text>
        <dbReference type="Rhea" id="RHEA:47004"/>
        <dbReference type="Rhea" id="RHEA-COMP:11060"/>
        <dbReference type="Rhea" id="RHEA-COMP:11605"/>
        <dbReference type="ChEBI" id="CHEBI:15377"/>
        <dbReference type="ChEBI" id="CHEBI:30013"/>
        <dbReference type="ChEBI" id="CHEBI:43474"/>
        <dbReference type="ChEBI" id="CHEBI:61977"/>
        <dbReference type="EC" id="3.1.3.16"/>
    </reaction>
</comment>
<comment type="subcellular location">
    <subcellularLocation>
        <location evidence="1">Cytoplasm</location>
    </subcellularLocation>
    <subcellularLocation>
        <location evidence="2">Nucleus</location>
    </subcellularLocation>
</comment>
<comment type="similarity">
    <text evidence="4">Belongs to the protein-tyrosine phosphatase family. Non-receptor class dual specificity subfamily.</text>
</comment>
<organism>
    <name type="scientific">Oryzias latipes</name>
    <name type="common">Japanese rice fish</name>
    <name type="synonym">Japanese killifish</name>
    <dbReference type="NCBI Taxonomy" id="8090"/>
    <lineage>
        <taxon>Eukaryota</taxon>
        <taxon>Metazoa</taxon>
        <taxon>Chordata</taxon>
        <taxon>Craniata</taxon>
        <taxon>Vertebrata</taxon>
        <taxon>Euteleostomi</taxon>
        <taxon>Actinopterygii</taxon>
        <taxon>Neopterygii</taxon>
        <taxon>Teleostei</taxon>
        <taxon>Neoteleostei</taxon>
        <taxon>Acanthomorphata</taxon>
        <taxon>Ovalentaria</taxon>
        <taxon>Atherinomorphae</taxon>
        <taxon>Beloniformes</taxon>
        <taxon>Adrianichthyidae</taxon>
        <taxon>Oryziinae</taxon>
        <taxon>Oryzias</taxon>
    </lineage>
</organism>
<dbReference type="EC" id="3.1.3.16" evidence="1"/>
<dbReference type="EC" id="3.1.3.48" evidence="1"/>
<dbReference type="EMBL" id="BAAF04042477">
    <property type="status" value="NOT_ANNOTATED_CDS"/>
    <property type="molecule type" value="Genomic_DNA"/>
</dbReference>
<dbReference type="SMR" id="P0C5A1"/>
<dbReference type="STRING" id="8090.ENSORLP00000029415"/>
<dbReference type="InParanoid" id="P0C5A1"/>
<dbReference type="Proteomes" id="UP000001038">
    <property type="component" value="Unplaced"/>
</dbReference>
<dbReference type="Proteomes" id="UP000265180">
    <property type="component" value="Chromosome 9"/>
</dbReference>
<dbReference type="Proteomes" id="UP000265200">
    <property type="component" value="Chromosome 9"/>
</dbReference>
<dbReference type="GO" id="GO:0005737">
    <property type="term" value="C:cytoplasm"/>
    <property type="evidence" value="ECO:0000250"/>
    <property type="project" value="UniProtKB"/>
</dbReference>
<dbReference type="GO" id="GO:0005634">
    <property type="term" value="C:nucleus"/>
    <property type="evidence" value="ECO:0000250"/>
    <property type="project" value="UniProtKB"/>
</dbReference>
<dbReference type="GO" id="GO:0033549">
    <property type="term" value="F:MAP kinase phosphatase activity"/>
    <property type="evidence" value="ECO:0000318"/>
    <property type="project" value="GO_Central"/>
</dbReference>
<dbReference type="GO" id="GO:0004722">
    <property type="term" value="F:protein serine/threonine phosphatase activity"/>
    <property type="evidence" value="ECO:0007669"/>
    <property type="project" value="UniProtKB-EC"/>
</dbReference>
<dbReference type="GO" id="GO:0004725">
    <property type="term" value="F:protein tyrosine phosphatase activity"/>
    <property type="evidence" value="ECO:0007669"/>
    <property type="project" value="UniProtKB-EC"/>
</dbReference>
<dbReference type="GO" id="GO:0008138">
    <property type="term" value="F:protein tyrosine/serine/threonine phosphatase activity"/>
    <property type="evidence" value="ECO:0000250"/>
    <property type="project" value="UniProtKB"/>
</dbReference>
<dbReference type="GO" id="GO:0043409">
    <property type="term" value="P:negative regulation of MAPK cascade"/>
    <property type="evidence" value="ECO:0000318"/>
    <property type="project" value="GO_Central"/>
</dbReference>
<dbReference type="GO" id="GO:0006470">
    <property type="term" value="P:protein dephosphorylation"/>
    <property type="evidence" value="ECO:0000250"/>
    <property type="project" value="UniProtKB"/>
</dbReference>
<dbReference type="FunFam" id="3.90.190.10:FF:000037">
    <property type="entry name" value="dual specificity protein phosphatase 26"/>
    <property type="match status" value="1"/>
</dbReference>
<dbReference type="Gene3D" id="3.90.190.10">
    <property type="entry name" value="Protein tyrosine phosphatase superfamily"/>
    <property type="match status" value="1"/>
</dbReference>
<dbReference type="InterPro" id="IPR020405">
    <property type="entry name" value="Atypical_DUSP_subfamA"/>
</dbReference>
<dbReference type="InterPro" id="IPR000340">
    <property type="entry name" value="Dual-sp_phosphatase_cat-dom"/>
</dbReference>
<dbReference type="InterPro" id="IPR029021">
    <property type="entry name" value="Prot-tyrosine_phosphatase-like"/>
</dbReference>
<dbReference type="InterPro" id="IPR016130">
    <property type="entry name" value="Tyr_Pase_AS"/>
</dbReference>
<dbReference type="InterPro" id="IPR003595">
    <property type="entry name" value="Tyr_Pase_cat"/>
</dbReference>
<dbReference type="InterPro" id="IPR000387">
    <property type="entry name" value="Tyr_Pase_dom"/>
</dbReference>
<dbReference type="InterPro" id="IPR020422">
    <property type="entry name" value="TYR_PHOSPHATASE_DUAL_dom"/>
</dbReference>
<dbReference type="PANTHER" id="PTHR45682">
    <property type="entry name" value="AGAP008228-PA"/>
    <property type="match status" value="1"/>
</dbReference>
<dbReference type="PANTHER" id="PTHR45682:SF6">
    <property type="entry name" value="DUAL SPECIFICITY PHOSPHATASE 29"/>
    <property type="match status" value="1"/>
</dbReference>
<dbReference type="Pfam" id="PF00782">
    <property type="entry name" value="DSPc"/>
    <property type="match status" value="1"/>
</dbReference>
<dbReference type="PRINTS" id="PR01908">
    <property type="entry name" value="ADSPHPHTASE"/>
</dbReference>
<dbReference type="PRINTS" id="PR01909">
    <property type="entry name" value="ADSPHPHTASEA"/>
</dbReference>
<dbReference type="SMART" id="SM00195">
    <property type="entry name" value="DSPc"/>
    <property type="match status" value="1"/>
</dbReference>
<dbReference type="SMART" id="SM00404">
    <property type="entry name" value="PTPc_motif"/>
    <property type="match status" value="1"/>
</dbReference>
<dbReference type="SUPFAM" id="SSF52799">
    <property type="entry name" value="(Phosphotyrosine protein) phosphatases II"/>
    <property type="match status" value="1"/>
</dbReference>
<dbReference type="PROSITE" id="PS00383">
    <property type="entry name" value="TYR_PHOSPHATASE_1"/>
    <property type="match status" value="1"/>
</dbReference>
<dbReference type="PROSITE" id="PS50056">
    <property type="entry name" value="TYR_PHOSPHATASE_2"/>
    <property type="match status" value="1"/>
</dbReference>
<dbReference type="PROSITE" id="PS50054">
    <property type="entry name" value="TYR_PHOSPHATASE_DUAL"/>
    <property type="match status" value="1"/>
</dbReference>
<gene>
    <name type="primary">dusp29</name>
    <name type="synonym">dupd1</name>
</gene>
<evidence type="ECO:0000250" key="1">
    <source>
        <dbReference type="UniProtKB" id="Q68J44"/>
    </source>
</evidence>
<evidence type="ECO:0000250" key="2">
    <source>
        <dbReference type="UniProtKB" id="Q8BK84"/>
    </source>
</evidence>
<evidence type="ECO:0000255" key="3">
    <source>
        <dbReference type="PROSITE-ProRule" id="PRU00160"/>
    </source>
</evidence>
<evidence type="ECO:0000305" key="4"/>
<sequence length="203" mass="23002">MSSCVEKSRGRNPYAAVQVDPDSDYITPGTLDLEQLFWSGPTAQYAHVNQVWPRIYLGDEKTALERPALKDLGITHVLNAAVGKWNNVLTGADYYTGMNIRYLGVEADDKPTFNISQYFSQAAEFIHEALIHPVLVHCVMGRSRSATLVLAYLMIKEHLSVVDAVEHVRQRRCILPNHGFLKQLRALDIALQEEKLRLKRKDE</sequence>
<reference key="1">
    <citation type="journal article" date="2007" name="Nature">
        <title>The medaka draft genome and insights into vertebrate genome evolution.</title>
        <authorList>
            <person name="Kasahara M."/>
            <person name="Naruse K."/>
            <person name="Sasaki S."/>
            <person name="Nakatani Y."/>
            <person name="Qu W."/>
            <person name="Ahsan B."/>
            <person name="Yamada T."/>
            <person name="Nagayasu Y."/>
            <person name="Doi K."/>
            <person name="Kasai Y."/>
            <person name="Jindo T."/>
            <person name="Kobayashi D."/>
            <person name="Shimada A."/>
            <person name="Toyoda A."/>
            <person name="Kuroki Y."/>
            <person name="Fujiyama A."/>
            <person name="Sasaki T."/>
            <person name="Shimizu A."/>
            <person name="Asakawa S."/>
            <person name="Shimizu N."/>
            <person name="Hashimoto S."/>
            <person name="Yang J."/>
            <person name="Lee Y."/>
            <person name="Matsushima K."/>
            <person name="Sugano S."/>
            <person name="Sakaizumi M."/>
            <person name="Narita T."/>
            <person name="Ohishi K."/>
            <person name="Haga S."/>
            <person name="Ohta F."/>
            <person name="Nomoto H."/>
            <person name="Nogata K."/>
            <person name="Morishita T."/>
            <person name="Endo T."/>
            <person name="Shin-I T."/>
            <person name="Takeda H."/>
            <person name="Morishita S."/>
            <person name="Kohara Y."/>
        </authorList>
    </citation>
    <scope>NUCLEOTIDE SEQUENCE [LARGE SCALE GENOMIC DNA]</scope>
    <source>
        <strain>Hd-rR</strain>
    </source>
</reference>